<gene>
    <name evidence="1" type="primary">ycaR</name>
    <name type="ordered locus">SeHA_C1085</name>
</gene>
<evidence type="ECO:0000255" key="1">
    <source>
        <dbReference type="HAMAP-Rule" id="MF_01187"/>
    </source>
</evidence>
<name>YCAR_SALHS</name>
<reference key="1">
    <citation type="journal article" date="2011" name="J. Bacteriol.">
        <title>Comparative genomics of 28 Salmonella enterica isolates: evidence for CRISPR-mediated adaptive sublineage evolution.</title>
        <authorList>
            <person name="Fricke W.F."/>
            <person name="Mammel M.K."/>
            <person name="McDermott P.F."/>
            <person name="Tartera C."/>
            <person name="White D.G."/>
            <person name="Leclerc J.E."/>
            <person name="Ravel J."/>
            <person name="Cebula T.A."/>
        </authorList>
    </citation>
    <scope>NUCLEOTIDE SEQUENCE [LARGE SCALE GENOMIC DNA]</scope>
    <source>
        <strain>SL476</strain>
    </source>
</reference>
<feature type="chain" id="PRO_1000138331" description="UPF0434 protein YcaR">
    <location>
        <begin position="1"/>
        <end position="60"/>
    </location>
</feature>
<proteinExistence type="inferred from homology"/>
<sequence length="60" mass="6856">MDHRLLEIIACPVCNGKLWYNQEQQELICKLDNLAFPLRDGIPVLLENEARALTSDESKS</sequence>
<comment type="similarity">
    <text evidence="1">Belongs to the UPF0434 family.</text>
</comment>
<organism>
    <name type="scientific">Salmonella heidelberg (strain SL476)</name>
    <dbReference type="NCBI Taxonomy" id="454169"/>
    <lineage>
        <taxon>Bacteria</taxon>
        <taxon>Pseudomonadati</taxon>
        <taxon>Pseudomonadota</taxon>
        <taxon>Gammaproteobacteria</taxon>
        <taxon>Enterobacterales</taxon>
        <taxon>Enterobacteriaceae</taxon>
        <taxon>Salmonella</taxon>
    </lineage>
</organism>
<accession>B4TDQ4</accession>
<protein>
    <recommendedName>
        <fullName evidence="1">UPF0434 protein YcaR</fullName>
    </recommendedName>
</protein>
<dbReference type="EMBL" id="CP001120">
    <property type="protein sequence ID" value="ACF69653.1"/>
    <property type="molecule type" value="Genomic_DNA"/>
</dbReference>
<dbReference type="RefSeq" id="WP_000350061.1">
    <property type="nucleotide sequence ID" value="NC_011083.1"/>
</dbReference>
<dbReference type="SMR" id="B4TDQ4"/>
<dbReference type="KEGG" id="seh:SeHA_C1085"/>
<dbReference type="HOGENOM" id="CLU_155659_3_1_6"/>
<dbReference type="Proteomes" id="UP000001866">
    <property type="component" value="Chromosome"/>
</dbReference>
<dbReference type="GO" id="GO:0005829">
    <property type="term" value="C:cytosol"/>
    <property type="evidence" value="ECO:0007669"/>
    <property type="project" value="TreeGrafter"/>
</dbReference>
<dbReference type="FunFam" id="2.20.25.10:FF:000002">
    <property type="entry name" value="UPF0434 protein YcaR"/>
    <property type="match status" value="1"/>
</dbReference>
<dbReference type="Gene3D" id="2.20.25.10">
    <property type="match status" value="1"/>
</dbReference>
<dbReference type="HAMAP" id="MF_01187">
    <property type="entry name" value="UPF0434"/>
    <property type="match status" value="1"/>
</dbReference>
<dbReference type="InterPro" id="IPR005651">
    <property type="entry name" value="Trm112-like"/>
</dbReference>
<dbReference type="NCBIfam" id="NF008806">
    <property type="entry name" value="PRK11827.1"/>
    <property type="match status" value="1"/>
</dbReference>
<dbReference type="PANTHER" id="PTHR33505:SF4">
    <property type="entry name" value="PROTEIN PREY, MITOCHONDRIAL"/>
    <property type="match status" value="1"/>
</dbReference>
<dbReference type="PANTHER" id="PTHR33505">
    <property type="entry name" value="ZGC:162634"/>
    <property type="match status" value="1"/>
</dbReference>
<dbReference type="Pfam" id="PF03966">
    <property type="entry name" value="Trm112p"/>
    <property type="match status" value="1"/>
</dbReference>
<dbReference type="SUPFAM" id="SSF158997">
    <property type="entry name" value="Trm112p-like"/>
    <property type="match status" value="1"/>
</dbReference>